<gene>
    <name evidence="2" type="primary">tigB</name>
    <name evidence="4" type="ORF">SAMN02745912_03529</name>
</gene>
<comment type="function">
    <text evidence="1">Precursor peptide which undergoes post-translational modifications by tailoring enzymes, leading to the mature natural product.</text>
</comment>
<comment type="PTM">
    <text evidence="1">Is subject to maturation by TigE, that catalyzes the formation of methylcyclopropylglycine (mCPG) residues from isoleucine residues residing in the repeating TIGSVS motifs.</text>
</comment>
<accession>A0A1M6T247</accession>
<feature type="chain" id="PRO_0000460352" description="Precursor peptide TigB">
    <location>
        <begin position="1"/>
        <end position="65"/>
    </location>
</feature>
<feature type="repeat" description="TIGSVS motif" evidence="3">
    <location>
        <begin position="16"/>
        <end position="21"/>
    </location>
</feature>
<feature type="repeat" description="TIGSVS motif" evidence="3">
    <location>
        <begin position="23"/>
        <end position="28"/>
    </location>
</feature>
<feature type="repeat" description="TIGSVS motif" evidence="3">
    <location>
        <begin position="33"/>
        <end position="38"/>
    </location>
</feature>
<feature type="repeat" description="TIGSVS motif" evidence="3">
    <location>
        <begin position="40"/>
        <end position="45"/>
    </location>
</feature>
<feature type="repeat" description="TIGSVS motif" evidence="3">
    <location>
        <begin position="47"/>
        <end position="52"/>
    </location>
</feature>
<feature type="repeat" description="TIGSVS motif" evidence="3">
    <location>
        <begin position="54"/>
        <end position="59"/>
    </location>
</feature>
<feature type="modified residue" description="Methylcyclopropylglycine" evidence="3">
    <location>
        <position position="17"/>
    </location>
</feature>
<feature type="modified residue" description="Methylcyclopropylglycine" evidence="3">
    <location>
        <position position="24"/>
    </location>
</feature>
<feature type="modified residue" description="Methylcyclopropylglycine" evidence="3">
    <location>
        <position position="34"/>
    </location>
</feature>
<feature type="modified residue" description="Methylcyclopropylglycine" evidence="3">
    <location>
        <position position="41"/>
    </location>
</feature>
<feature type="modified residue" description="Methylcyclopropylglycine" evidence="3">
    <location>
        <position position="48"/>
    </location>
</feature>
<feature type="modified residue" description="Methylcyclopropylglycine" evidence="3">
    <location>
        <position position="55"/>
    </location>
</feature>
<evidence type="ECO:0000269" key="1">
    <source>
    </source>
</evidence>
<evidence type="ECO:0000303" key="2">
    <source>
    </source>
</evidence>
<evidence type="ECO:0000305" key="3">
    <source>
    </source>
</evidence>
<evidence type="ECO:0000312" key="4">
    <source>
        <dbReference type="EMBL" id="SHK51062.1"/>
    </source>
</evidence>
<sequence>MKRSSMDLVYKPISGTIGSVSGTIGSVSSVSGTIGSVSGTIGSVSGTIGSVSGTIGSVSGTIGSV</sequence>
<name>TIGB_PARC5</name>
<proteinExistence type="predicted"/>
<protein>
    <recommendedName>
        <fullName evidence="2">Precursor peptide TigB</fullName>
    </recommendedName>
</protein>
<organism>
    <name type="scientific">Paramaledivibacter caminithermalis (strain DSM 15212 / CIP 107654 / DViRD3)</name>
    <name type="common">Clostridium caminithermale</name>
    <dbReference type="NCBI Taxonomy" id="1121301"/>
    <lineage>
        <taxon>Bacteria</taxon>
        <taxon>Bacillati</taxon>
        <taxon>Bacillota</taxon>
        <taxon>Clostridia</taxon>
        <taxon>Peptostreptococcales</taxon>
        <taxon>Caminicellaceae</taxon>
        <taxon>Paramaledivibacter</taxon>
    </lineage>
</organism>
<reference key="1">
    <citation type="submission" date="2016-11" db="EMBL/GenBank/DDBJ databases">
        <authorList>
            <person name="Jaros S."/>
            <person name="Januszkiewicz K."/>
            <person name="Wedrychowicz H."/>
        </authorList>
    </citation>
    <scope>NUCLEOTIDE SEQUENCE [LARGE SCALE GENOMIC DNA]</scope>
    <source>
        <strain>DSM 15212 / CIP 107654 / DViRD3</strain>
    </source>
</reference>
<reference key="2">
    <citation type="journal article" date="2024" name="ACS Chem. Biol.">
        <title>Structural, Biochemical, and Bioinformatic Basis for Identifying Radical SAM Cyclopropyl Synthases.</title>
        <authorList>
            <person name="Lien Y."/>
            <person name="Lachowicz J.C."/>
            <person name="Mendauletova A."/>
            <person name="Zizola C."/>
            <person name="Ngendahimana T."/>
            <person name="Kostenko A."/>
            <person name="Eaton S.S."/>
            <person name="Latham J.A."/>
            <person name="Grove T.L."/>
        </authorList>
    </citation>
    <scope>FUNCTION</scope>
    <scope>PTM</scope>
    <source>
        <strain>DSM 15212 / CIP 107654 / DViRD3</strain>
    </source>
</reference>
<dbReference type="EMBL" id="FRAG01000077">
    <property type="protein sequence ID" value="SHK51062.1"/>
    <property type="molecule type" value="Genomic_DNA"/>
</dbReference>
<dbReference type="RefSeq" id="WP_073153085.1">
    <property type="nucleotide sequence ID" value="NZ_FRAG01000077.1"/>
</dbReference>
<dbReference type="Proteomes" id="UP000184465">
    <property type="component" value="Unassembled WGS sequence"/>
</dbReference>
<dbReference type="NCBIfam" id="NF047709">
    <property type="entry name" value="RiPP_TigB"/>
    <property type="match status" value="1"/>
</dbReference>
<keyword id="KW-1185">Reference proteome</keyword>
<keyword id="KW-0677">Repeat</keyword>